<keyword id="KW-0028">Amino-acid biosynthesis</keyword>
<keyword id="KW-0963">Cytoplasm</keyword>
<keyword id="KW-0368">Histidine biosynthesis</keyword>
<keyword id="KW-1185">Reference proteome</keyword>
<dbReference type="EMBL" id="CP000386">
    <property type="protein sequence ID" value="ABG04066.1"/>
    <property type="molecule type" value="Genomic_DNA"/>
</dbReference>
<dbReference type="RefSeq" id="WP_011564084.1">
    <property type="nucleotide sequence ID" value="NC_008148.1"/>
</dbReference>
<dbReference type="SMR" id="Q1AX12"/>
<dbReference type="STRING" id="266117.Rxyl_1100"/>
<dbReference type="KEGG" id="rxy:Rxyl_1100"/>
<dbReference type="eggNOG" id="COG0124">
    <property type="taxonomic scope" value="Bacteria"/>
</dbReference>
<dbReference type="HOGENOM" id="CLU_025113_0_2_11"/>
<dbReference type="OrthoDB" id="9801867at2"/>
<dbReference type="PhylomeDB" id="Q1AX12"/>
<dbReference type="UniPathway" id="UPA00031">
    <property type="reaction ID" value="UER00006"/>
</dbReference>
<dbReference type="Proteomes" id="UP000006637">
    <property type="component" value="Chromosome"/>
</dbReference>
<dbReference type="GO" id="GO:0005737">
    <property type="term" value="C:cytoplasm"/>
    <property type="evidence" value="ECO:0007669"/>
    <property type="project" value="UniProtKB-SubCell"/>
</dbReference>
<dbReference type="GO" id="GO:0004821">
    <property type="term" value="F:histidine-tRNA ligase activity"/>
    <property type="evidence" value="ECO:0007669"/>
    <property type="project" value="TreeGrafter"/>
</dbReference>
<dbReference type="GO" id="GO:0006427">
    <property type="term" value="P:histidyl-tRNA aminoacylation"/>
    <property type="evidence" value="ECO:0007669"/>
    <property type="project" value="TreeGrafter"/>
</dbReference>
<dbReference type="GO" id="GO:0000105">
    <property type="term" value="P:L-histidine biosynthetic process"/>
    <property type="evidence" value="ECO:0007669"/>
    <property type="project" value="UniProtKB-UniRule"/>
</dbReference>
<dbReference type="CDD" id="cd00773">
    <property type="entry name" value="HisRS-like_core"/>
    <property type="match status" value="1"/>
</dbReference>
<dbReference type="Gene3D" id="3.30.930.10">
    <property type="entry name" value="Bira Bifunctional Protein, Domain 2"/>
    <property type="match status" value="1"/>
</dbReference>
<dbReference type="HAMAP" id="MF_00125">
    <property type="entry name" value="HisZ"/>
    <property type="match status" value="1"/>
</dbReference>
<dbReference type="InterPro" id="IPR006195">
    <property type="entry name" value="aa-tRNA-synth_II"/>
</dbReference>
<dbReference type="InterPro" id="IPR045864">
    <property type="entry name" value="aa-tRNA-synth_II/BPL/LPL"/>
</dbReference>
<dbReference type="InterPro" id="IPR041715">
    <property type="entry name" value="HisRS-like_core"/>
</dbReference>
<dbReference type="InterPro" id="IPR004516">
    <property type="entry name" value="HisRS/HisZ"/>
</dbReference>
<dbReference type="InterPro" id="IPR004517">
    <property type="entry name" value="HisZ"/>
</dbReference>
<dbReference type="NCBIfam" id="TIGR00443">
    <property type="entry name" value="hisZ_biosyn_reg"/>
    <property type="match status" value="1"/>
</dbReference>
<dbReference type="PANTHER" id="PTHR43707:SF1">
    <property type="entry name" value="HISTIDINE--TRNA LIGASE, MITOCHONDRIAL-RELATED"/>
    <property type="match status" value="1"/>
</dbReference>
<dbReference type="PANTHER" id="PTHR43707">
    <property type="entry name" value="HISTIDYL-TRNA SYNTHETASE"/>
    <property type="match status" value="1"/>
</dbReference>
<dbReference type="Pfam" id="PF13393">
    <property type="entry name" value="tRNA-synt_His"/>
    <property type="match status" value="1"/>
</dbReference>
<dbReference type="SUPFAM" id="SSF55681">
    <property type="entry name" value="Class II aaRS and biotin synthetases"/>
    <property type="match status" value="1"/>
</dbReference>
<dbReference type="PROSITE" id="PS50862">
    <property type="entry name" value="AA_TRNA_LIGASE_II"/>
    <property type="match status" value="1"/>
</dbReference>
<accession>Q1AX12</accession>
<gene>
    <name evidence="1" type="primary">hisZ</name>
    <name type="ordered locus">Rxyl_1100</name>
</gene>
<evidence type="ECO:0000255" key="1">
    <source>
        <dbReference type="HAMAP-Rule" id="MF_00125"/>
    </source>
</evidence>
<evidence type="ECO:0000256" key="2">
    <source>
        <dbReference type="SAM" id="MobiDB-lite"/>
    </source>
</evidence>
<feature type="chain" id="PRO_1000203117" description="ATP phosphoribosyltransferase regulatory subunit">
    <location>
        <begin position="1"/>
        <end position="413"/>
    </location>
</feature>
<feature type="region of interest" description="Disordered" evidence="2">
    <location>
        <begin position="1"/>
        <end position="21"/>
    </location>
</feature>
<name>HISZ_RUBXD</name>
<proteinExistence type="inferred from homology"/>
<sequence>MRSRAARKFSTTPGTRDVLPPESTRLLDVQRRVLGRFRLHGFREVITPALEYAEVVEEARLRDSAFKLFDPDNQMLLLRPEMTTPIARLVSQRLRNAPPPFKLSYSLPVYRRSEVGRGQSAEFHQAGVEVVGSASPGEDAGTIALLVEALEAAGLGPGEDFMVVLGQAAFYRGFLERSCPEVAPALLSALAGKDLVRVEELSRRLPDAVAAGARGIPRLVGPASDGAVLEEAERYASGGGGAALENLRAILELLGAHGRLEAVMLDLGLIGRHDYYTGAVYEVYAAGLGFTVANGGRYDNLLRRFGEPLPATGFAISLERLVSVLPPERPAPLLVLVGEDAEAVRAARALRGEGVPVLHVSGGLAPEEAERYARSVDARWVGYPAPGGVKLREVGEGGFWLLAVEEAARRVLG</sequence>
<protein>
    <recommendedName>
        <fullName evidence="1">ATP phosphoribosyltransferase regulatory subunit</fullName>
    </recommendedName>
</protein>
<comment type="function">
    <text evidence="1">Required for the first step of histidine biosynthesis. May allow the feedback regulation of ATP phosphoribosyltransferase activity by histidine.</text>
</comment>
<comment type="pathway">
    <text evidence="1">Amino-acid biosynthesis; L-histidine biosynthesis; L-histidine from 5-phospho-alpha-D-ribose 1-diphosphate: step 1/9.</text>
</comment>
<comment type="subunit">
    <text evidence="1">Heteromultimer composed of HisG and HisZ subunits.</text>
</comment>
<comment type="subcellular location">
    <subcellularLocation>
        <location evidence="1">Cytoplasm</location>
    </subcellularLocation>
</comment>
<comment type="miscellaneous">
    <text>This function is generally fulfilled by the C-terminal part of HisG, which is missing in some bacteria such as this one.</text>
</comment>
<comment type="similarity">
    <text evidence="1">Belongs to the class-II aminoacyl-tRNA synthetase family. HisZ subfamily.</text>
</comment>
<organism>
    <name type="scientific">Rubrobacter xylanophilus (strain DSM 9941 / JCM 11954 / NBRC 16129 / PRD-1)</name>
    <dbReference type="NCBI Taxonomy" id="266117"/>
    <lineage>
        <taxon>Bacteria</taxon>
        <taxon>Bacillati</taxon>
        <taxon>Actinomycetota</taxon>
        <taxon>Rubrobacteria</taxon>
        <taxon>Rubrobacterales</taxon>
        <taxon>Rubrobacteraceae</taxon>
        <taxon>Rubrobacter</taxon>
    </lineage>
</organism>
<reference key="1">
    <citation type="submission" date="2006-06" db="EMBL/GenBank/DDBJ databases">
        <title>Complete sequence of Rubrobacter xylanophilus DSM 9941.</title>
        <authorList>
            <consortium name="US DOE Joint Genome Institute"/>
            <person name="Copeland A."/>
            <person name="Lucas S."/>
            <person name="Lapidus A."/>
            <person name="Barry K."/>
            <person name="Detter J.C."/>
            <person name="Glavina del Rio T."/>
            <person name="Hammon N."/>
            <person name="Israni S."/>
            <person name="Dalin E."/>
            <person name="Tice H."/>
            <person name="Pitluck S."/>
            <person name="Munk A.C."/>
            <person name="Brettin T."/>
            <person name="Bruce D."/>
            <person name="Han C."/>
            <person name="Tapia R."/>
            <person name="Gilna P."/>
            <person name="Schmutz J."/>
            <person name="Larimer F."/>
            <person name="Land M."/>
            <person name="Hauser L."/>
            <person name="Kyrpides N."/>
            <person name="Lykidis A."/>
            <person name="da Costa M.S."/>
            <person name="Rainey F.A."/>
            <person name="Empadinhas N."/>
            <person name="Jolivet E."/>
            <person name="Battista J.R."/>
            <person name="Richardson P."/>
        </authorList>
    </citation>
    <scope>NUCLEOTIDE SEQUENCE [LARGE SCALE GENOMIC DNA]</scope>
    <source>
        <strain>DSM 9941 / JCM 11954 / NBRC 16129 / PRD-1</strain>
    </source>
</reference>